<accession>P72821</accession>
<feature type="chain" id="PRO_0000157887" description="Uncharacterized protein slr1290">
    <location>
        <begin position="1"/>
        <end position="190"/>
    </location>
</feature>
<gene>
    <name type="ordered locus">slr1290</name>
</gene>
<protein>
    <recommendedName>
        <fullName>Uncharacterized protein slr1290</fullName>
    </recommendedName>
</protein>
<proteinExistence type="predicted"/>
<keyword id="KW-1185">Reference proteome</keyword>
<sequence>MIAHSPSAPFPKLSPEEYLQWEERQREKHEYFDGQIYAMGGGSKNHSVISVRLSTLFCNHLDGGDCEIGNSDLKIQIVNTQNYTCPDVSVTCDPRDRKSTQFITYPCLVVEVLSPSTEAYDRGGKFRLYAHNPMLQDYLLVSSTSVEIDLYHKNDDGDWLILNYQASDRLELKSIGLSFAVDVIYRGLAF</sequence>
<comment type="similarity">
    <text evidence="1">To Synechocystis PCC 6803 sll1609 and slr1290.</text>
</comment>
<name>Y1290_SYNY3</name>
<evidence type="ECO:0000305" key="1"/>
<dbReference type="EMBL" id="BA000022">
    <property type="protein sequence ID" value="BAA16836.1"/>
    <property type="molecule type" value="Genomic_DNA"/>
</dbReference>
<dbReference type="PIR" id="S74685">
    <property type="entry name" value="S74685"/>
</dbReference>
<dbReference type="SMR" id="P72821"/>
<dbReference type="STRING" id="1148.gene:10497694"/>
<dbReference type="PaxDb" id="1148-1651910"/>
<dbReference type="EnsemblBacteria" id="BAA16836">
    <property type="protein sequence ID" value="BAA16836"/>
    <property type="gene ID" value="BAA16836"/>
</dbReference>
<dbReference type="KEGG" id="syn:slr1290"/>
<dbReference type="eggNOG" id="COG4636">
    <property type="taxonomic scope" value="Bacteria"/>
</dbReference>
<dbReference type="InParanoid" id="P72821"/>
<dbReference type="PhylomeDB" id="P72821"/>
<dbReference type="Proteomes" id="UP000001425">
    <property type="component" value="Chromosome"/>
</dbReference>
<dbReference type="CDD" id="cd06260">
    <property type="entry name" value="DUF820-like"/>
    <property type="match status" value="1"/>
</dbReference>
<dbReference type="Gene3D" id="3.90.1570.10">
    <property type="entry name" value="tt1808, chain A"/>
    <property type="match status" value="1"/>
</dbReference>
<dbReference type="InterPro" id="IPR012296">
    <property type="entry name" value="Nuclease_put_TT1808"/>
</dbReference>
<dbReference type="InterPro" id="IPR011335">
    <property type="entry name" value="Restrct_endonuc-II-like"/>
</dbReference>
<dbReference type="InterPro" id="IPR008538">
    <property type="entry name" value="Uma2"/>
</dbReference>
<dbReference type="PANTHER" id="PTHR36558">
    <property type="entry name" value="GLR1098 PROTEIN"/>
    <property type="match status" value="1"/>
</dbReference>
<dbReference type="PANTHER" id="PTHR36558:SF1">
    <property type="entry name" value="RESTRICTION ENDONUCLEASE DOMAIN-CONTAINING PROTEIN-RELATED"/>
    <property type="match status" value="1"/>
</dbReference>
<dbReference type="Pfam" id="PF05685">
    <property type="entry name" value="Uma2"/>
    <property type="match status" value="1"/>
</dbReference>
<dbReference type="SUPFAM" id="SSF52980">
    <property type="entry name" value="Restriction endonuclease-like"/>
    <property type="match status" value="1"/>
</dbReference>
<reference key="1">
    <citation type="journal article" date="1996" name="DNA Res.">
        <title>Sequence analysis of the genome of the unicellular cyanobacterium Synechocystis sp. strain PCC6803. II. Sequence determination of the entire genome and assignment of potential protein-coding regions.</title>
        <authorList>
            <person name="Kaneko T."/>
            <person name="Sato S."/>
            <person name="Kotani H."/>
            <person name="Tanaka A."/>
            <person name="Asamizu E."/>
            <person name="Nakamura Y."/>
            <person name="Miyajima N."/>
            <person name="Hirosawa M."/>
            <person name="Sugiura M."/>
            <person name="Sasamoto S."/>
            <person name="Kimura T."/>
            <person name="Hosouchi T."/>
            <person name="Matsuno A."/>
            <person name="Muraki A."/>
            <person name="Nakazaki N."/>
            <person name="Naruo K."/>
            <person name="Okumura S."/>
            <person name="Shimpo S."/>
            <person name="Takeuchi C."/>
            <person name="Wada T."/>
            <person name="Watanabe A."/>
            <person name="Yamada M."/>
            <person name="Yasuda M."/>
            <person name="Tabata S."/>
        </authorList>
    </citation>
    <scope>NUCLEOTIDE SEQUENCE [LARGE SCALE GENOMIC DNA]</scope>
    <source>
        <strain>ATCC 27184 / PCC 6803 / Kazusa</strain>
    </source>
</reference>
<organism>
    <name type="scientific">Synechocystis sp. (strain ATCC 27184 / PCC 6803 / Kazusa)</name>
    <dbReference type="NCBI Taxonomy" id="1111708"/>
    <lineage>
        <taxon>Bacteria</taxon>
        <taxon>Bacillati</taxon>
        <taxon>Cyanobacteriota</taxon>
        <taxon>Cyanophyceae</taxon>
        <taxon>Synechococcales</taxon>
        <taxon>Merismopediaceae</taxon>
        <taxon>Synechocystis</taxon>
    </lineage>
</organism>